<accession>Q8PC50</accession>
<feature type="chain" id="PRO_0000146636" description="Small ribosomal subunit protein uS10">
    <location>
        <begin position="1"/>
        <end position="103"/>
    </location>
</feature>
<keyword id="KW-1185">Reference proteome</keyword>
<keyword id="KW-0687">Ribonucleoprotein</keyword>
<keyword id="KW-0689">Ribosomal protein</keyword>
<sequence length="103" mass="11687">MADQKIRIRLKAFDHRLIDRSASEIVETAKRTGAQVRGPIPLPTKIERYTILVSPHADKDARDQYETRTHKRVLDIVDPNDKTVDALMKLELAAGVDVQIKLT</sequence>
<dbReference type="EMBL" id="AE008922">
    <property type="protein sequence ID" value="AAM40204.1"/>
    <property type="molecule type" value="Genomic_DNA"/>
</dbReference>
<dbReference type="RefSeq" id="NP_636280.1">
    <property type="nucleotide sequence ID" value="NC_003902.1"/>
</dbReference>
<dbReference type="RefSeq" id="WP_011036122.1">
    <property type="nucleotide sequence ID" value="NC_003902.1"/>
</dbReference>
<dbReference type="SMR" id="Q8PC50"/>
<dbReference type="STRING" id="190485.XCC0894"/>
<dbReference type="EnsemblBacteria" id="AAM40204">
    <property type="protein sequence ID" value="AAM40204"/>
    <property type="gene ID" value="XCC0894"/>
</dbReference>
<dbReference type="GeneID" id="58014530"/>
<dbReference type="KEGG" id="xcc:XCC0894"/>
<dbReference type="PATRIC" id="fig|190485.4.peg.966"/>
<dbReference type="eggNOG" id="COG0051">
    <property type="taxonomic scope" value="Bacteria"/>
</dbReference>
<dbReference type="HOGENOM" id="CLU_122625_1_3_6"/>
<dbReference type="OrthoDB" id="9804464at2"/>
<dbReference type="Proteomes" id="UP000001010">
    <property type="component" value="Chromosome"/>
</dbReference>
<dbReference type="GO" id="GO:0015935">
    <property type="term" value="C:small ribosomal subunit"/>
    <property type="evidence" value="ECO:0000318"/>
    <property type="project" value="GO_Central"/>
</dbReference>
<dbReference type="GO" id="GO:0003735">
    <property type="term" value="F:structural constituent of ribosome"/>
    <property type="evidence" value="ECO:0000318"/>
    <property type="project" value="GO_Central"/>
</dbReference>
<dbReference type="GO" id="GO:0000049">
    <property type="term" value="F:tRNA binding"/>
    <property type="evidence" value="ECO:0007669"/>
    <property type="project" value="UniProtKB-UniRule"/>
</dbReference>
<dbReference type="GO" id="GO:0006412">
    <property type="term" value="P:translation"/>
    <property type="evidence" value="ECO:0007669"/>
    <property type="project" value="UniProtKB-UniRule"/>
</dbReference>
<dbReference type="FunFam" id="3.30.70.600:FF:000001">
    <property type="entry name" value="30S ribosomal protein S10"/>
    <property type="match status" value="1"/>
</dbReference>
<dbReference type="Gene3D" id="3.30.70.600">
    <property type="entry name" value="Ribosomal protein S10 domain"/>
    <property type="match status" value="1"/>
</dbReference>
<dbReference type="HAMAP" id="MF_00508">
    <property type="entry name" value="Ribosomal_uS10"/>
    <property type="match status" value="1"/>
</dbReference>
<dbReference type="InterPro" id="IPR001848">
    <property type="entry name" value="Ribosomal_uS10"/>
</dbReference>
<dbReference type="InterPro" id="IPR018268">
    <property type="entry name" value="Ribosomal_uS10_CS"/>
</dbReference>
<dbReference type="InterPro" id="IPR027486">
    <property type="entry name" value="Ribosomal_uS10_dom"/>
</dbReference>
<dbReference type="InterPro" id="IPR036838">
    <property type="entry name" value="Ribosomal_uS10_dom_sf"/>
</dbReference>
<dbReference type="NCBIfam" id="NF001861">
    <property type="entry name" value="PRK00596.1"/>
    <property type="match status" value="1"/>
</dbReference>
<dbReference type="NCBIfam" id="TIGR01049">
    <property type="entry name" value="rpsJ_bact"/>
    <property type="match status" value="1"/>
</dbReference>
<dbReference type="PANTHER" id="PTHR11700">
    <property type="entry name" value="30S RIBOSOMAL PROTEIN S10 FAMILY MEMBER"/>
    <property type="match status" value="1"/>
</dbReference>
<dbReference type="Pfam" id="PF00338">
    <property type="entry name" value="Ribosomal_S10"/>
    <property type="match status" value="1"/>
</dbReference>
<dbReference type="PRINTS" id="PR00971">
    <property type="entry name" value="RIBOSOMALS10"/>
</dbReference>
<dbReference type="SMART" id="SM01403">
    <property type="entry name" value="Ribosomal_S10"/>
    <property type="match status" value="1"/>
</dbReference>
<dbReference type="SUPFAM" id="SSF54999">
    <property type="entry name" value="Ribosomal protein S10"/>
    <property type="match status" value="1"/>
</dbReference>
<dbReference type="PROSITE" id="PS00361">
    <property type="entry name" value="RIBOSOMAL_S10"/>
    <property type="match status" value="1"/>
</dbReference>
<evidence type="ECO:0000255" key="1">
    <source>
        <dbReference type="HAMAP-Rule" id="MF_00508"/>
    </source>
</evidence>
<evidence type="ECO:0000305" key="2"/>
<comment type="function">
    <text evidence="1">Involved in the binding of tRNA to the ribosomes.</text>
</comment>
<comment type="subunit">
    <text evidence="1">Part of the 30S ribosomal subunit.</text>
</comment>
<comment type="similarity">
    <text evidence="1">Belongs to the universal ribosomal protein uS10 family.</text>
</comment>
<gene>
    <name evidence="1" type="primary">rpsJ</name>
    <name type="ordered locus">XCC0894</name>
</gene>
<name>RS10_XANCP</name>
<organism>
    <name type="scientific">Xanthomonas campestris pv. campestris (strain ATCC 33913 / DSM 3586 / NCPPB 528 / LMG 568 / P 25)</name>
    <dbReference type="NCBI Taxonomy" id="190485"/>
    <lineage>
        <taxon>Bacteria</taxon>
        <taxon>Pseudomonadati</taxon>
        <taxon>Pseudomonadota</taxon>
        <taxon>Gammaproteobacteria</taxon>
        <taxon>Lysobacterales</taxon>
        <taxon>Lysobacteraceae</taxon>
        <taxon>Xanthomonas</taxon>
    </lineage>
</organism>
<reference key="1">
    <citation type="journal article" date="2002" name="Nature">
        <title>Comparison of the genomes of two Xanthomonas pathogens with differing host specificities.</title>
        <authorList>
            <person name="da Silva A.C.R."/>
            <person name="Ferro J.A."/>
            <person name="Reinach F.C."/>
            <person name="Farah C.S."/>
            <person name="Furlan L.R."/>
            <person name="Quaggio R.B."/>
            <person name="Monteiro-Vitorello C.B."/>
            <person name="Van Sluys M.A."/>
            <person name="Almeida N.F. Jr."/>
            <person name="Alves L.M.C."/>
            <person name="do Amaral A.M."/>
            <person name="Bertolini M.C."/>
            <person name="Camargo L.E.A."/>
            <person name="Camarotte G."/>
            <person name="Cannavan F."/>
            <person name="Cardozo J."/>
            <person name="Chambergo F."/>
            <person name="Ciapina L.P."/>
            <person name="Cicarelli R.M.B."/>
            <person name="Coutinho L.L."/>
            <person name="Cursino-Santos J.R."/>
            <person name="El-Dorry H."/>
            <person name="Faria J.B."/>
            <person name="Ferreira A.J.S."/>
            <person name="Ferreira R.C.C."/>
            <person name="Ferro M.I.T."/>
            <person name="Formighieri E.F."/>
            <person name="Franco M.C."/>
            <person name="Greggio C.C."/>
            <person name="Gruber A."/>
            <person name="Katsuyama A.M."/>
            <person name="Kishi L.T."/>
            <person name="Leite R.P."/>
            <person name="Lemos E.G.M."/>
            <person name="Lemos M.V.F."/>
            <person name="Locali E.C."/>
            <person name="Machado M.A."/>
            <person name="Madeira A.M.B.N."/>
            <person name="Martinez-Rossi N.M."/>
            <person name="Martins E.C."/>
            <person name="Meidanis J."/>
            <person name="Menck C.F.M."/>
            <person name="Miyaki C.Y."/>
            <person name="Moon D.H."/>
            <person name="Moreira L.M."/>
            <person name="Novo M.T.M."/>
            <person name="Okura V.K."/>
            <person name="Oliveira M.C."/>
            <person name="Oliveira V.R."/>
            <person name="Pereira H.A."/>
            <person name="Rossi A."/>
            <person name="Sena J.A.D."/>
            <person name="Silva C."/>
            <person name="de Souza R.F."/>
            <person name="Spinola L.A.F."/>
            <person name="Takita M.A."/>
            <person name="Tamura R.E."/>
            <person name="Teixeira E.C."/>
            <person name="Tezza R.I.D."/>
            <person name="Trindade dos Santos M."/>
            <person name="Truffi D."/>
            <person name="Tsai S.M."/>
            <person name="White F.F."/>
            <person name="Setubal J.C."/>
            <person name="Kitajima J.P."/>
        </authorList>
    </citation>
    <scope>NUCLEOTIDE SEQUENCE [LARGE SCALE GENOMIC DNA]</scope>
    <source>
        <strain>ATCC 33913 / DSM 3586 / NCPPB 528 / LMG 568 / P 25</strain>
    </source>
</reference>
<protein>
    <recommendedName>
        <fullName evidence="1">Small ribosomal subunit protein uS10</fullName>
    </recommendedName>
    <alternativeName>
        <fullName evidence="2">30S ribosomal protein S10</fullName>
    </alternativeName>
</protein>
<proteinExistence type="inferred from homology"/>